<name>Y261_STRP3</name>
<proteinExistence type="inferred from homology"/>
<evidence type="ECO:0000255" key="1">
    <source>
        <dbReference type="HAMAP-Rule" id="MF_00363"/>
    </source>
</evidence>
<feature type="chain" id="PRO_0000214989" description="UPF0154 protein SpyM3_0261">
    <location>
        <begin position="1"/>
        <end position="80"/>
    </location>
</feature>
<feature type="transmembrane region" description="Helical" evidence="1">
    <location>
        <begin position="4"/>
        <end position="24"/>
    </location>
</feature>
<sequence length="80" mass="8894">MSTAIWILLLIVALGVGVFGGIFIARKQIEKEIGEHPRLTPEAIREMMSQMGQKPSEAKIQQTYRNIIKQSKAAVSKGKK</sequence>
<keyword id="KW-0472">Membrane</keyword>
<keyword id="KW-0812">Transmembrane</keyword>
<keyword id="KW-1133">Transmembrane helix</keyword>
<protein>
    <recommendedName>
        <fullName evidence="1">UPF0154 protein SpyM3_0261</fullName>
    </recommendedName>
</protein>
<gene>
    <name type="ordered locus">SpyM3_0261</name>
</gene>
<organism>
    <name type="scientific">Streptococcus pyogenes serotype M3 (strain ATCC BAA-595 / MGAS315)</name>
    <dbReference type="NCBI Taxonomy" id="198466"/>
    <lineage>
        <taxon>Bacteria</taxon>
        <taxon>Bacillati</taxon>
        <taxon>Bacillota</taxon>
        <taxon>Bacilli</taxon>
        <taxon>Lactobacillales</taxon>
        <taxon>Streptococcaceae</taxon>
        <taxon>Streptococcus</taxon>
    </lineage>
</organism>
<comment type="subcellular location">
    <subcellularLocation>
        <location evidence="1">Membrane</location>
        <topology evidence="1">Single-pass membrane protein</topology>
    </subcellularLocation>
</comment>
<comment type="similarity">
    <text evidence="1">Belongs to the UPF0154 family.</text>
</comment>
<accession>P0DG86</accession>
<accession>P67296</accession>
<accession>Q9A1B8</accession>
<dbReference type="EMBL" id="AE014074">
    <property type="protein sequence ID" value="AAM78868.1"/>
    <property type="molecule type" value="Genomic_DNA"/>
</dbReference>
<dbReference type="RefSeq" id="WP_002985908.1">
    <property type="nucleotide sequence ID" value="NC_004070.1"/>
</dbReference>
<dbReference type="SMR" id="P0DG86"/>
<dbReference type="KEGG" id="spg:SpyM3_0261"/>
<dbReference type="HOGENOM" id="CLU_180108_0_0_9"/>
<dbReference type="Proteomes" id="UP000000564">
    <property type="component" value="Chromosome"/>
</dbReference>
<dbReference type="GO" id="GO:0005886">
    <property type="term" value="C:plasma membrane"/>
    <property type="evidence" value="ECO:0007669"/>
    <property type="project" value="UniProtKB-UniRule"/>
</dbReference>
<dbReference type="HAMAP" id="MF_00363">
    <property type="entry name" value="UPF0154"/>
    <property type="match status" value="1"/>
</dbReference>
<dbReference type="InterPro" id="IPR005359">
    <property type="entry name" value="UPF0154"/>
</dbReference>
<dbReference type="Pfam" id="PF03672">
    <property type="entry name" value="UPF0154"/>
    <property type="match status" value="1"/>
</dbReference>
<reference key="1">
    <citation type="journal article" date="2002" name="Proc. Natl. Acad. Sci. U.S.A.">
        <title>Genome sequence of a serotype M3 strain of group A Streptococcus: phage-encoded toxins, the high-virulence phenotype, and clone emergence.</title>
        <authorList>
            <person name="Beres S.B."/>
            <person name="Sylva G.L."/>
            <person name="Barbian K.D."/>
            <person name="Lei B."/>
            <person name="Hoff J.S."/>
            <person name="Mammarella N.D."/>
            <person name="Liu M.-Y."/>
            <person name="Smoot J.C."/>
            <person name="Porcella S.F."/>
            <person name="Parkins L.D."/>
            <person name="Campbell D.S."/>
            <person name="Smith T.M."/>
            <person name="McCormick J.K."/>
            <person name="Leung D.Y.M."/>
            <person name="Schlievert P.M."/>
            <person name="Musser J.M."/>
        </authorList>
    </citation>
    <scope>NUCLEOTIDE SEQUENCE [LARGE SCALE GENOMIC DNA]</scope>
    <source>
        <strain>ATCC BAA-595 / MGAS315</strain>
    </source>
</reference>